<organism>
    <name type="scientific">Rickettsia conorii (strain ATCC VR-613 / Malish 7)</name>
    <dbReference type="NCBI Taxonomy" id="272944"/>
    <lineage>
        <taxon>Bacteria</taxon>
        <taxon>Pseudomonadati</taxon>
        <taxon>Pseudomonadota</taxon>
        <taxon>Alphaproteobacteria</taxon>
        <taxon>Rickettsiales</taxon>
        <taxon>Rickettsiaceae</taxon>
        <taxon>Rickettsieae</taxon>
        <taxon>Rickettsia</taxon>
        <taxon>spotted fever group</taxon>
    </lineage>
</organism>
<accession>Q92J95</accession>
<keyword id="KW-0687">Ribonucleoprotein</keyword>
<keyword id="KW-0689">Ribosomal protein</keyword>
<keyword id="KW-0694">RNA-binding</keyword>
<keyword id="KW-0699">rRNA-binding</keyword>
<keyword id="KW-0820">tRNA-binding</keyword>
<gene>
    <name evidence="1" type="primary">rpsL</name>
    <name type="ordered locus">RC0172</name>
</gene>
<reference key="1">
    <citation type="journal article" date="2001" name="Science">
        <title>Mechanisms of evolution in Rickettsia conorii and R. prowazekii.</title>
        <authorList>
            <person name="Ogata H."/>
            <person name="Audic S."/>
            <person name="Renesto-Audiffren P."/>
            <person name="Fournier P.-E."/>
            <person name="Barbe V."/>
            <person name="Samson D."/>
            <person name="Roux V."/>
            <person name="Cossart P."/>
            <person name="Weissenbach J."/>
            <person name="Claverie J.-M."/>
            <person name="Raoult D."/>
        </authorList>
    </citation>
    <scope>NUCLEOTIDE SEQUENCE [LARGE SCALE GENOMIC DNA]</scope>
    <source>
        <strain>ATCC VR-613 / Malish 7</strain>
    </source>
</reference>
<sequence>MPTYNQLVRFGRKSKTRKTKSPALESNPFKSGVCLVVKTVTPKKPNSALRKIATVRLSNKRTVNAYIPGEKHSVKEHDRVLVRGGQVPDLPGVKYHIVLGAYDIAGVKGRKQGRSRYGAPRKQVAVTKK</sequence>
<evidence type="ECO:0000255" key="1">
    <source>
        <dbReference type="HAMAP-Rule" id="MF_00403"/>
    </source>
</evidence>
<evidence type="ECO:0000256" key="2">
    <source>
        <dbReference type="SAM" id="MobiDB-lite"/>
    </source>
</evidence>
<evidence type="ECO:0000305" key="3"/>
<comment type="function">
    <text evidence="1">With S4 and S5 plays an important role in translational accuracy.</text>
</comment>
<comment type="function">
    <text evidence="1">Interacts with and stabilizes bases of the 16S rRNA that are involved in tRNA selection in the A site and with the mRNA backbone. Located at the interface of the 30S and 50S subunits, it traverses the body of the 30S subunit contacting proteins on the other side and probably holding the rRNA structure together. The combined cluster of proteins S8, S12 and S17 appears to hold together the shoulder and platform of the 30S subunit.</text>
</comment>
<comment type="subunit">
    <text evidence="1">Part of the 30S ribosomal subunit. Contacts proteins S8 and S17. May interact with IF1 in the 30S initiation complex.</text>
</comment>
<comment type="similarity">
    <text evidence="1">Belongs to the universal ribosomal protein uS12 family.</text>
</comment>
<comment type="caution">
    <text evidence="3">Because the enzyme that would modify Asp-89 to 3-methylthioaspartic acid has not been found in the proteome of this organism, that modification is not predicted.</text>
</comment>
<name>RS12_RICCN</name>
<feature type="chain" id="PRO_0000146298" description="Small ribosomal subunit protein uS12">
    <location>
        <begin position="1"/>
        <end position="129"/>
    </location>
</feature>
<feature type="region of interest" description="Disordered" evidence="2">
    <location>
        <begin position="1"/>
        <end position="25"/>
    </location>
</feature>
<feature type="region of interest" description="Disordered" evidence="2">
    <location>
        <begin position="110"/>
        <end position="129"/>
    </location>
</feature>
<feature type="compositionally biased region" description="Basic residues" evidence="2">
    <location>
        <begin position="10"/>
        <end position="20"/>
    </location>
</feature>
<protein>
    <recommendedName>
        <fullName evidence="1">Small ribosomal subunit protein uS12</fullName>
    </recommendedName>
    <alternativeName>
        <fullName evidence="3">30S ribosomal protein S12</fullName>
    </alternativeName>
</protein>
<dbReference type="EMBL" id="AE006914">
    <property type="protein sequence ID" value="AAL02710.1"/>
    <property type="molecule type" value="Genomic_DNA"/>
</dbReference>
<dbReference type="PIR" id="D97721">
    <property type="entry name" value="D97721"/>
</dbReference>
<dbReference type="RefSeq" id="WP_004996647.1">
    <property type="nucleotide sequence ID" value="NC_003103.1"/>
</dbReference>
<dbReference type="SMR" id="Q92J95"/>
<dbReference type="GeneID" id="95361887"/>
<dbReference type="KEGG" id="rco:RC0172"/>
<dbReference type="HOGENOM" id="CLU_104295_1_3_5"/>
<dbReference type="Proteomes" id="UP000000816">
    <property type="component" value="Chromosome"/>
</dbReference>
<dbReference type="GO" id="GO:0015935">
    <property type="term" value="C:small ribosomal subunit"/>
    <property type="evidence" value="ECO:0007669"/>
    <property type="project" value="InterPro"/>
</dbReference>
<dbReference type="GO" id="GO:0019843">
    <property type="term" value="F:rRNA binding"/>
    <property type="evidence" value="ECO:0007669"/>
    <property type="project" value="UniProtKB-UniRule"/>
</dbReference>
<dbReference type="GO" id="GO:0003735">
    <property type="term" value="F:structural constituent of ribosome"/>
    <property type="evidence" value="ECO:0007669"/>
    <property type="project" value="InterPro"/>
</dbReference>
<dbReference type="GO" id="GO:0000049">
    <property type="term" value="F:tRNA binding"/>
    <property type="evidence" value="ECO:0007669"/>
    <property type="project" value="UniProtKB-UniRule"/>
</dbReference>
<dbReference type="GO" id="GO:0006412">
    <property type="term" value="P:translation"/>
    <property type="evidence" value="ECO:0007669"/>
    <property type="project" value="UniProtKB-UniRule"/>
</dbReference>
<dbReference type="CDD" id="cd03368">
    <property type="entry name" value="Ribosomal_S12"/>
    <property type="match status" value="1"/>
</dbReference>
<dbReference type="FunFam" id="2.40.50.140:FF:000192">
    <property type="entry name" value="Mitochondrial ribosomal protein S12"/>
    <property type="match status" value="1"/>
</dbReference>
<dbReference type="Gene3D" id="2.40.50.140">
    <property type="entry name" value="Nucleic acid-binding proteins"/>
    <property type="match status" value="1"/>
</dbReference>
<dbReference type="HAMAP" id="MF_00403_B">
    <property type="entry name" value="Ribosomal_uS12_B"/>
    <property type="match status" value="1"/>
</dbReference>
<dbReference type="InterPro" id="IPR012340">
    <property type="entry name" value="NA-bd_OB-fold"/>
</dbReference>
<dbReference type="InterPro" id="IPR006032">
    <property type="entry name" value="Ribosomal_uS12"/>
</dbReference>
<dbReference type="InterPro" id="IPR005679">
    <property type="entry name" value="Ribosomal_uS12_bac"/>
</dbReference>
<dbReference type="NCBIfam" id="TIGR00981">
    <property type="entry name" value="rpsL_bact"/>
    <property type="match status" value="1"/>
</dbReference>
<dbReference type="PANTHER" id="PTHR11652">
    <property type="entry name" value="30S RIBOSOMAL PROTEIN S12 FAMILY MEMBER"/>
    <property type="match status" value="1"/>
</dbReference>
<dbReference type="Pfam" id="PF00164">
    <property type="entry name" value="Ribosom_S12_S23"/>
    <property type="match status" value="1"/>
</dbReference>
<dbReference type="PIRSF" id="PIRSF002133">
    <property type="entry name" value="Ribosomal_S12/S23"/>
    <property type="match status" value="1"/>
</dbReference>
<dbReference type="PRINTS" id="PR01034">
    <property type="entry name" value="RIBOSOMALS12"/>
</dbReference>
<dbReference type="SUPFAM" id="SSF50249">
    <property type="entry name" value="Nucleic acid-binding proteins"/>
    <property type="match status" value="1"/>
</dbReference>
<dbReference type="PROSITE" id="PS00055">
    <property type="entry name" value="RIBOSOMAL_S12"/>
    <property type="match status" value="1"/>
</dbReference>
<proteinExistence type="inferred from homology"/>